<sequence length="91" mass="10692">MEYEYPIDLDWSNEEMISVINFFNHVEKYYESGVTAGDFMGAYKRFKEIVPAKAEEKQIFNTFEKSSGYNSYKAVQDVKTHSEEQRVTAKK</sequence>
<comment type="similarity">
    <text evidence="1">Belongs to the UPF0223 family.</text>
</comment>
<accession>Q6GAB7</accession>
<proteinExistence type="inferred from homology"/>
<organism>
    <name type="scientific">Staphylococcus aureus (strain MSSA476)</name>
    <dbReference type="NCBI Taxonomy" id="282459"/>
    <lineage>
        <taxon>Bacteria</taxon>
        <taxon>Bacillati</taxon>
        <taxon>Bacillota</taxon>
        <taxon>Bacilli</taxon>
        <taxon>Bacillales</taxon>
        <taxon>Staphylococcaceae</taxon>
        <taxon>Staphylococcus</taxon>
    </lineage>
</organism>
<feature type="chain" id="PRO_0000216687" description="UPF0223 protein SAS1032">
    <location>
        <begin position="1"/>
        <end position="91"/>
    </location>
</feature>
<dbReference type="EMBL" id="BX571857">
    <property type="protein sequence ID" value="CAG42806.1"/>
    <property type="molecule type" value="Genomic_DNA"/>
</dbReference>
<dbReference type="RefSeq" id="WP_000455597.1">
    <property type="nucleotide sequence ID" value="NC_002953.3"/>
</dbReference>
<dbReference type="SMR" id="Q6GAB7"/>
<dbReference type="KEGG" id="sas:SAS1032"/>
<dbReference type="HOGENOM" id="CLU_166693_0_0_9"/>
<dbReference type="Gene3D" id="1.10.220.80">
    <property type="entry name" value="BH2638-like"/>
    <property type="match status" value="1"/>
</dbReference>
<dbReference type="HAMAP" id="MF_01041">
    <property type="entry name" value="UPF0223"/>
    <property type="match status" value="1"/>
</dbReference>
<dbReference type="InterPro" id="IPR023324">
    <property type="entry name" value="BH2638-like_sf"/>
</dbReference>
<dbReference type="InterPro" id="IPR007920">
    <property type="entry name" value="UPF0223"/>
</dbReference>
<dbReference type="NCBIfam" id="NF003353">
    <property type="entry name" value="PRK04387.1"/>
    <property type="match status" value="1"/>
</dbReference>
<dbReference type="Pfam" id="PF05256">
    <property type="entry name" value="UPF0223"/>
    <property type="match status" value="1"/>
</dbReference>
<dbReference type="PIRSF" id="PIRSF037260">
    <property type="entry name" value="UPF0223"/>
    <property type="match status" value="1"/>
</dbReference>
<dbReference type="SUPFAM" id="SSF158504">
    <property type="entry name" value="BH2638-like"/>
    <property type="match status" value="1"/>
</dbReference>
<reference key="1">
    <citation type="journal article" date="2004" name="Proc. Natl. Acad. Sci. U.S.A.">
        <title>Complete genomes of two clinical Staphylococcus aureus strains: evidence for the rapid evolution of virulence and drug resistance.</title>
        <authorList>
            <person name="Holden M.T.G."/>
            <person name="Feil E.J."/>
            <person name="Lindsay J.A."/>
            <person name="Peacock S.J."/>
            <person name="Day N.P.J."/>
            <person name="Enright M.C."/>
            <person name="Foster T.J."/>
            <person name="Moore C.E."/>
            <person name="Hurst L."/>
            <person name="Atkin R."/>
            <person name="Barron A."/>
            <person name="Bason N."/>
            <person name="Bentley S.D."/>
            <person name="Chillingworth C."/>
            <person name="Chillingworth T."/>
            <person name="Churcher C."/>
            <person name="Clark L."/>
            <person name="Corton C."/>
            <person name="Cronin A."/>
            <person name="Doggett J."/>
            <person name="Dowd L."/>
            <person name="Feltwell T."/>
            <person name="Hance Z."/>
            <person name="Harris B."/>
            <person name="Hauser H."/>
            <person name="Holroyd S."/>
            <person name="Jagels K."/>
            <person name="James K.D."/>
            <person name="Lennard N."/>
            <person name="Line A."/>
            <person name="Mayes R."/>
            <person name="Moule S."/>
            <person name="Mungall K."/>
            <person name="Ormond D."/>
            <person name="Quail M.A."/>
            <person name="Rabbinowitsch E."/>
            <person name="Rutherford K.M."/>
            <person name="Sanders M."/>
            <person name="Sharp S."/>
            <person name="Simmonds M."/>
            <person name="Stevens K."/>
            <person name="Whitehead S."/>
            <person name="Barrell B.G."/>
            <person name="Spratt B.G."/>
            <person name="Parkhill J."/>
        </authorList>
    </citation>
    <scope>NUCLEOTIDE SEQUENCE [LARGE SCALE GENOMIC DNA]</scope>
    <source>
        <strain>MSSA476</strain>
    </source>
</reference>
<evidence type="ECO:0000255" key="1">
    <source>
        <dbReference type="HAMAP-Rule" id="MF_01041"/>
    </source>
</evidence>
<name>Y1032_STAAS</name>
<gene>
    <name type="ordered locus">SAS1032</name>
</gene>
<protein>
    <recommendedName>
        <fullName evidence="1">UPF0223 protein SAS1032</fullName>
    </recommendedName>
</protein>